<sequence>MIEIFKDTGATHDLVYHSKINTFVWDVEFDIVLSDSKELNKCYFVKCFNPYRINGKCDFAVSSIDIFSEGKRLLIENEFNFKITKAVHVATSKDVTEIVLHLSERISSPFPIVKEVVYLD</sequence>
<name>DSAD1_BPSPB</name>
<proteinExistence type="evidence at protein level"/>
<reference key="1">
    <citation type="journal article" date="1998" name="Proc. Natl. Acad. Sci. U.S.A.">
        <title>Introns and intein coding sequence in the ribonucleotide reductase genes of Bacillus subtilis temperate bacteriophage SPbeta.</title>
        <authorList>
            <person name="Lazarevic V."/>
            <person name="Soldo B."/>
            <person name="Duesterhoeft A."/>
            <person name="Hilbert H."/>
            <person name="Maueel C."/>
            <person name="Karamata D."/>
        </authorList>
    </citation>
    <scope>NUCLEOTIDE SEQUENCE [GENOMIC DNA]</scope>
</reference>
<reference key="2">
    <citation type="journal article" date="2022" name="Nat. Microbiol.">
        <title>Multiple phage resistance systems inhibit infection via SIR2-dependent NAD+ depletion.</title>
        <authorList>
            <person name="Garb J."/>
            <person name="Lopatina A."/>
            <person name="Bernheim A."/>
            <person name="Zaremba M."/>
            <person name="Siksnys V."/>
            <person name="Melamed S."/>
            <person name="Leavitt A."/>
            <person name="Millman A."/>
            <person name="Amitai G."/>
            <person name="Sorek R."/>
        </authorList>
    </citation>
    <scope>FUNCTION</scope>
</reference>
<reference evidence="15 16 17" key="3">
    <citation type="journal article" date="2024" name="Nat. Commun.">
        <title>The structural basis of the activation and inhibition of DSR2 NADase by phage proteins.</title>
        <authorList>
            <person name="Wang R."/>
            <person name="Xu Q."/>
            <person name="Wu Z."/>
            <person name="Li J."/>
            <person name="Guo H."/>
            <person name="Liao T."/>
            <person name="Shi Y."/>
            <person name="Yuan L."/>
            <person name="Gao H."/>
            <person name="Yang R."/>
            <person name="Shi Z."/>
            <person name="Li F."/>
        </authorList>
    </citation>
    <scope>STRUCTURE BY ELECTRON MICROSCOPY (3.25 ANGSTROMS) IN COMPLEX WITH BACILLUS SUBTILIS DSR2</scope>
    <scope>INTERACTION WITH BACILLUS SUBTILIS DSR2</scope>
    <scope>MUTAGENESIS OF HIS-17; LYS-19; ASN-21 AND PHE-59</scope>
    <scope>FUNCTION</scope>
</reference>
<reference evidence="12 13 14" key="4">
    <citation type="journal article" date="2024" name="Nat. Commun.">
        <title>Structural basis for phage-mediated activation and repression of bacterial DSR2 anti-phage defense system.</title>
        <authorList>
            <person name="Zhang J.T."/>
            <person name="Liu X.Y."/>
            <person name="Li Z."/>
            <person name="Wei X.Y."/>
            <person name="Song X.Y."/>
            <person name="Cui N."/>
            <person name="Zhong J."/>
            <person name="Li H."/>
            <person name="Jia N."/>
        </authorList>
    </citation>
    <scope>STRUCTURE BY ELECTRON MICROSCOPY (2.56 ANGSTROMS) IN COMPLEX WITH BACILLUS SUBTILIS DSR2</scope>
    <scope>STRUCTURE BY ELECTRON MICROSCOPY (2.85 ANGSTROMS) IN COMPLEX WITH BACILLUS SUBTILIS DSR2 AND NAD</scope>
    <scope>INTERACTION WITH BACILLUS SUBTILIS DSR2</scope>
    <scope>FUNCTION</scope>
</reference>
<reference evidence="11" key="5">
    <citation type="journal article" date="2024" name="Nat. Commun.">
        <title>Molecular basis of bacterial DSR2 anti-phage defense and viral immune evasion.</title>
        <authorList>
            <person name="Huang J."/>
            <person name="Zhu K."/>
            <person name="Gao Y."/>
            <person name="Ye F."/>
            <person name="Li Z."/>
            <person name="Ge Y."/>
            <person name="Liu S."/>
            <person name="Yang J."/>
            <person name="Gao A."/>
        </authorList>
    </citation>
    <scope>STRUCTURE BY ELECTRON MICROSCOPY (3.86 ANGSTROMS) IN COMPLEX WITH BACILLUS SUBTILIS DSR2</scope>
    <scope>INTERACTION WITH BACILLUS SUBTILIS DSR2</scope>
    <scope>FUNCTION</scope>
    <source>
        <strain>29R</strain>
    </source>
</reference>
<reference evidence="9 10" key="6">
    <citation type="journal article" date="2024" name="Nat. Commun.">
        <title>Insights into the modulation of bacterial NADase activity by phage proteins.</title>
        <authorList>
            <person name="Yin H."/>
            <person name="Li X."/>
            <person name="Wang X."/>
            <person name="Zhang C."/>
            <person name="Gao J."/>
            <person name="Yu G."/>
            <person name="He Q."/>
            <person name="Yang J."/>
            <person name="Liu X."/>
            <person name="Wei Y."/>
            <person name="Li Z."/>
            <person name="Zhang H."/>
        </authorList>
    </citation>
    <scope>STRUCTURE BY ELECTRON MICROSCOPY (3.40 ANGSTROMS) IN COMPLEX WITH BACILLUS SUBTILIS DSR2</scope>
    <scope>FUNCTION</scope>
    <scope>INTERACTION WITH BACILLUS SUBTILIS DSR2</scope>
</reference>
<reference evidence="18 19" key="7">
    <citation type="journal article" date="2024" name="Int. J. Biol. Macromol.">
        <title>Structural insights into autoinhibition and activation of defense-associated sirtuin protein.</title>
        <authorList>
            <person name="Yang X."/>
            <person name="Wang Y."/>
            <person name="Zheng J."/>
        </authorList>
    </citation>
    <scope>STRUCTURE BY ELECTRON MICROSCOPY (3.35 ANGSTROMS) IN COMPLEX WITH BACILLUS SUBTILIS DSR2</scope>
    <scope>INTERACTION WITH BACILLUS SUBTILIS DSR2</scope>
</reference>
<evidence type="ECO:0000269" key="1">
    <source>
    </source>
</evidence>
<evidence type="ECO:0000269" key="2">
    <source>
    </source>
</evidence>
<evidence type="ECO:0000269" key="3">
    <source>
    </source>
</evidence>
<evidence type="ECO:0000269" key="4">
    <source>
    </source>
</evidence>
<evidence type="ECO:0000269" key="5">
    <source>
    </source>
</evidence>
<evidence type="ECO:0000269" key="6">
    <source>
    </source>
</evidence>
<evidence type="ECO:0000303" key="7">
    <source>
    </source>
</evidence>
<evidence type="ECO:0000305" key="8"/>
<evidence type="ECO:0007744" key="9">
    <source>
        <dbReference type="PDB" id="8W56"/>
    </source>
</evidence>
<evidence type="ECO:0007744" key="10">
    <source>
        <dbReference type="PDB" id="8WKN"/>
    </source>
</evidence>
<evidence type="ECO:0007744" key="11">
    <source>
        <dbReference type="PDB" id="8WKT"/>
    </source>
</evidence>
<evidence type="ECO:0007744" key="12">
    <source>
        <dbReference type="PDB" id="8WYD"/>
    </source>
</evidence>
<evidence type="ECO:0007744" key="13">
    <source>
        <dbReference type="PDB" id="8WYE"/>
    </source>
</evidence>
<evidence type="ECO:0007744" key="14">
    <source>
        <dbReference type="PDB" id="8WYF"/>
    </source>
</evidence>
<evidence type="ECO:0007744" key="15">
    <source>
        <dbReference type="PDB" id="8Y3M"/>
    </source>
</evidence>
<evidence type="ECO:0007744" key="16">
    <source>
        <dbReference type="PDB" id="8Y3W"/>
    </source>
</evidence>
<evidence type="ECO:0007744" key="17">
    <source>
        <dbReference type="PDB" id="8Y3Y"/>
    </source>
</evidence>
<evidence type="ECO:0007744" key="18">
    <source>
        <dbReference type="PDB" id="8YKF"/>
    </source>
</evidence>
<evidence type="ECO:0007744" key="19">
    <source>
        <dbReference type="PDB" id="8YL5"/>
    </source>
</evidence>
<evidence type="ECO:0007829" key="20">
    <source>
        <dbReference type="PDB" id="8WYD"/>
    </source>
</evidence>
<evidence type="ECO:0007829" key="21">
    <source>
        <dbReference type="PDB" id="8WYE"/>
    </source>
</evidence>
<evidence type="ECO:0007829" key="22">
    <source>
        <dbReference type="PDB" id="8YKF"/>
    </source>
</evidence>
<keyword id="KW-0002">3D-structure</keyword>
<keyword id="KW-0945">Host-virus interaction</keyword>
<keyword id="KW-1090">Inhibition of host innate immune response by virus</keyword>
<keyword id="KW-1185">Reference proteome</keyword>
<keyword id="KW-0899">Viral immunoevasion</keyword>
<protein>
    <recommendedName>
        <fullName evidence="7">DSR anti-defense 1</fullName>
        <shortName>DSAD1</shortName>
    </recommendedName>
</protein>
<organismHost>
    <name type="scientific">Bacillus pumilus</name>
    <name type="common">Bacillus mesentericus</name>
    <dbReference type="NCBI Taxonomy" id="1408"/>
</organismHost>
<organismHost>
    <name type="scientific">Bacillus subtilis</name>
    <dbReference type="NCBI Taxonomy" id="1423"/>
</organismHost>
<dbReference type="EMBL" id="AF020713">
    <property type="protein sequence ID" value="AAC13153.1"/>
    <property type="molecule type" value="Genomic_DNA"/>
</dbReference>
<dbReference type="PIR" id="T12944">
    <property type="entry name" value="T12944"/>
</dbReference>
<dbReference type="RefSeq" id="NP_046732.1">
    <property type="nucleotide sequence ID" value="NC_001884.1"/>
</dbReference>
<dbReference type="PDB" id="8K9A">
    <property type="method" value="EM"/>
    <property type="resolution" value="3.90 A"/>
    <property type="chains" value="E/F=1-120"/>
</dbReference>
<dbReference type="PDB" id="8W56">
    <property type="method" value="EM"/>
    <property type="resolution" value="3.59 A"/>
    <property type="chains" value="E/F=1-120"/>
</dbReference>
<dbReference type="PDB" id="8WKN">
    <property type="method" value="EM"/>
    <property type="resolution" value="3.40 A"/>
    <property type="chains" value="E=1-120"/>
</dbReference>
<dbReference type="PDB" id="8WKT">
    <property type="method" value="EM"/>
    <property type="resolution" value="3.86 A"/>
    <property type="chains" value="C=1-120"/>
</dbReference>
<dbReference type="PDB" id="8WYD">
    <property type="method" value="EM"/>
    <property type="resolution" value="2.56 A"/>
    <property type="chains" value="E/F=1-120"/>
</dbReference>
<dbReference type="PDB" id="8WYE">
    <property type="method" value="EM"/>
    <property type="resolution" value="2.49 A"/>
    <property type="chains" value="C=1-120"/>
</dbReference>
<dbReference type="PDB" id="8WYF">
    <property type="method" value="EM"/>
    <property type="resolution" value="2.85 A"/>
    <property type="chains" value="E=1-120"/>
</dbReference>
<dbReference type="PDB" id="8Y3M">
    <property type="method" value="EM"/>
    <property type="resolution" value="3.25 A"/>
    <property type="chains" value="C=1-120"/>
</dbReference>
<dbReference type="PDB" id="8Y3W">
    <property type="method" value="EM"/>
    <property type="resolution" value="3.45 A"/>
    <property type="chains" value="C/F=1-120"/>
</dbReference>
<dbReference type="PDB" id="8Y3Y">
    <property type="method" value="EM"/>
    <property type="resolution" value="3.33 A"/>
    <property type="chains" value="C/F=1-120"/>
</dbReference>
<dbReference type="PDB" id="8YKF">
    <property type="method" value="EM"/>
    <property type="resolution" value="3.35 A"/>
    <property type="chains" value="E/F=1-120"/>
</dbReference>
<dbReference type="PDB" id="8YL5">
    <property type="method" value="EM"/>
    <property type="resolution" value="3.45 A"/>
    <property type="chains" value="E/F=1-120"/>
</dbReference>
<dbReference type="PDBsum" id="8K9A"/>
<dbReference type="PDBsum" id="8W56"/>
<dbReference type="PDBsum" id="8WKN"/>
<dbReference type="PDBsum" id="8WKT"/>
<dbReference type="PDBsum" id="8WYD"/>
<dbReference type="PDBsum" id="8WYE"/>
<dbReference type="PDBsum" id="8WYF"/>
<dbReference type="PDBsum" id="8Y3M"/>
<dbReference type="PDBsum" id="8Y3W"/>
<dbReference type="PDBsum" id="8Y3Y"/>
<dbReference type="PDBsum" id="8YKF"/>
<dbReference type="PDBsum" id="8YL5"/>
<dbReference type="EMDB" id="EMD-37924"/>
<dbReference type="EMDB" id="EMD-37925"/>
<dbReference type="EMDB" id="EMD-37926"/>
<dbReference type="EMDB" id="EMD-39369"/>
<dbReference type="EMDB" id="EMD-39382"/>
<dbReference type="SMR" id="O64191"/>
<dbReference type="GeneID" id="1261484"/>
<dbReference type="KEGG" id="vg:1261484"/>
<dbReference type="Proteomes" id="UP000009091">
    <property type="component" value="Genome"/>
</dbReference>
<dbReference type="GO" id="GO:0052170">
    <property type="term" value="P:symbiont-mediated suppression of host innate immune response"/>
    <property type="evidence" value="ECO:0007669"/>
    <property type="project" value="UniProtKB-KW"/>
</dbReference>
<accession>O64191</accession>
<organism>
    <name type="scientific">Bacillus phage SPbeta</name>
    <name type="common">Bacillus phage SPBc2</name>
    <name type="synonym">Bacteriophage SP-beta</name>
    <dbReference type="NCBI Taxonomy" id="2932878"/>
    <lineage>
        <taxon>Viruses</taxon>
        <taxon>Duplodnaviria</taxon>
        <taxon>Heunggongvirae</taxon>
        <taxon>Uroviricota</taxon>
        <taxon>Caudoviricetes</taxon>
        <taxon>Spbetavirus</taxon>
        <taxon>Spbetavirus SPbeta</taxon>
    </lineage>
</organism>
<comment type="function">
    <text evidence="1 2 3 4 5">Counteracts the defense-associated sirtuin 2 (DSR2) defense system of the host (PubMed:36192536, PubMed:38538592, PubMed:38555355, PubMed:38729958, PubMed:39039073). Inhibits the NADase activity of host DSR2 by competing with the tail tube protein that normally activates DSR2 (PubMed:38538592, PubMed:39039073).</text>
</comment>
<comment type="subunit">
    <text evidence="2 3 4 6">Interacts with Bacillus subtilis DSR2 (via C-terminus) in a 2:4 ratio; this interaction leads to the absence of activation of the NADase defense activity of DSR2.</text>
</comment>
<comment type="similarity">
    <text evidence="8">Belongs to the DSR anti-defense 1 family.</text>
</comment>
<feature type="chain" id="PRO_0000461780" description="DSR anti-defense 1">
    <location>
        <begin position="1"/>
        <end position="120"/>
    </location>
</feature>
<feature type="site" description="Interaction with host DSR2" evidence="4 5">
    <location>
        <position position="59"/>
    </location>
</feature>
<feature type="mutagenesis site" description="Complete loss of the ability to inactivate the host DSR2 NADase activity." evidence="5">
    <original>H</original>
    <variation>E</variation>
    <location>
        <position position="17"/>
    </location>
</feature>
<feature type="mutagenesis site" description="Complete loss of the ability to inactivate the host DSR2 NADase activity." evidence="5">
    <original>K</original>
    <variation>E</variation>
    <location>
        <position position="19"/>
    </location>
</feature>
<feature type="mutagenesis site" description="Complete loss of the ability to inactivate the host DSR2 NADase activity." evidence="5">
    <original>N</original>
    <variation>E</variation>
    <location>
        <position position="21"/>
    </location>
</feature>
<feature type="mutagenesis site" description="Complete loss of the ability to inactivate the host DSR2 NADase activity." evidence="5">
    <original>F</original>
    <variation>E</variation>
    <location>
        <position position="59"/>
    </location>
</feature>
<feature type="turn" evidence="22">
    <location>
        <begin position="9"/>
        <end position="12"/>
    </location>
</feature>
<feature type="strand" evidence="21">
    <location>
        <begin position="15"/>
        <end position="17"/>
    </location>
</feature>
<feature type="turn" evidence="21">
    <location>
        <begin position="18"/>
        <end position="21"/>
    </location>
</feature>
<feature type="strand" evidence="21">
    <location>
        <begin position="22"/>
        <end position="24"/>
    </location>
</feature>
<feature type="strand" evidence="21">
    <location>
        <begin position="27"/>
        <end position="33"/>
    </location>
</feature>
<feature type="turn" evidence="22">
    <location>
        <begin position="34"/>
        <end position="36"/>
    </location>
</feature>
<feature type="strand" evidence="21">
    <location>
        <begin position="38"/>
        <end position="48"/>
    </location>
</feature>
<feature type="strand" evidence="21">
    <location>
        <begin position="60"/>
        <end position="68"/>
    </location>
</feature>
<feature type="strand" evidence="20">
    <location>
        <begin position="71"/>
        <end position="73"/>
    </location>
</feature>
<feature type="strand" evidence="21">
    <location>
        <begin position="81"/>
        <end position="91"/>
    </location>
</feature>
<feature type="helix" evidence="21">
    <location>
        <begin position="96"/>
        <end position="106"/>
    </location>
</feature>
<feature type="strand" evidence="21">
    <location>
        <begin position="108"/>
        <end position="118"/>
    </location>
</feature>
<gene>
    <name type="primary">yotI</name>
</gene>